<evidence type="ECO:0000255" key="1">
    <source>
        <dbReference type="HAMAP-Rule" id="MF_00902"/>
    </source>
</evidence>
<gene>
    <name evidence="1" type="primary">tatC</name>
    <name type="ordered locus">RMDY18_10430</name>
</gene>
<feature type="chain" id="PRO_0000412871" description="Sec-independent protein translocase protein TatC">
    <location>
        <begin position="1"/>
        <end position="293"/>
    </location>
</feature>
<feature type="transmembrane region" description="Helical" evidence="1">
    <location>
        <begin position="35"/>
        <end position="55"/>
    </location>
</feature>
<feature type="transmembrane region" description="Helical" evidence="1">
    <location>
        <begin position="87"/>
        <end position="107"/>
    </location>
</feature>
<feature type="transmembrane region" description="Helical" evidence="1">
    <location>
        <begin position="123"/>
        <end position="143"/>
    </location>
</feature>
<feature type="transmembrane region" description="Helical" evidence="1">
    <location>
        <begin position="173"/>
        <end position="193"/>
    </location>
</feature>
<feature type="transmembrane region" description="Helical" evidence="1">
    <location>
        <begin position="204"/>
        <end position="224"/>
    </location>
</feature>
<feature type="transmembrane region" description="Helical" evidence="1">
    <location>
        <begin position="228"/>
        <end position="248"/>
    </location>
</feature>
<reference key="1">
    <citation type="submission" date="2009-07" db="EMBL/GenBank/DDBJ databases">
        <title>Complete genome sequence of Rothia mucilaginosa DJ.</title>
        <authorList>
            <person name="Yamane K."/>
            <person name="Nambu T."/>
            <person name="Mashimo C."/>
            <person name="Sugimori C."/>
            <person name="Yamanaka T."/>
            <person name="Leung K."/>
            <person name="Fukushima H."/>
        </authorList>
    </citation>
    <scope>NUCLEOTIDE SEQUENCE [LARGE SCALE GENOMIC DNA]</scope>
    <source>
        <strain>DY-18</strain>
    </source>
</reference>
<proteinExistence type="inferred from homology"/>
<dbReference type="EMBL" id="AP011540">
    <property type="protein sequence ID" value="BAI64875.1"/>
    <property type="molecule type" value="Genomic_DNA"/>
</dbReference>
<dbReference type="RefSeq" id="WP_012903535.1">
    <property type="nucleotide sequence ID" value="NC_013715.1"/>
</dbReference>
<dbReference type="SMR" id="D2NT99"/>
<dbReference type="STRING" id="680646.RMDY18_10430"/>
<dbReference type="KEGG" id="rmu:RMDY18_10430"/>
<dbReference type="eggNOG" id="COG0805">
    <property type="taxonomic scope" value="Bacteria"/>
</dbReference>
<dbReference type="HOGENOM" id="CLU_031942_6_0_11"/>
<dbReference type="Proteomes" id="UP000001883">
    <property type="component" value="Chromosome"/>
</dbReference>
<dbReference type="GO" id="GO:0033281">
    <property type="term" value="C:TAT protein transport complex"/>
    <property type="evidence" value="ECO:0007669"/>
    <property type="project" value="UniProtKB-UniRule"/>
</dbReference>
<dbReference type="GO" id="GO:0009977">
    <property type="term" value="F:proton motive force dependent protein transmembrane transporter activity"/>
    <property type="evidence" value="ECO:0007669"/>
    <property type="project" value="TreeGrafter"/>
</dbReference>
<dbReference type="GO" id="GO:0065002">
    <property type="term" value="P:intracellular protein transmembrane transport"/>
    <property type="evidence" value="ECO:0007669"/>
    <property type="project" value="TreeGrafter"/>
</dbReference>
<dbReference type="GO" id="GO:0043953">
    <property type="term" value="P:protein transport by the Tat complex"/>
    <property type="evidence" value="ECO:0007669"/>
    <property type="project" value="UniProtKB-UniRule"/>
</dbReference>
<dbReference type="HAMAP" id="MF_00902">
    <property type="entry name" value="TatC"/>
    <property type="match status" value="1"/>
</dbReference>
<dbReference type="InterPro" id="IPR002033">
    <property type="entry name" value="TatC"/>
</dbReference>
<dbReference type="NCBIfam" id="TIGR00945">
    <property type="entry name" value="tatC"/>
    <property type="match status" value="1"/>
</dbReference>
<dbReference type="PANTHER" id="PTHR30371">
    <property type="entry name" value="SEC-INDEPENDENT PROTEIN TRANSLOCASE PROTEIN TATC"/>
    <property type="match status" value="1"/>
</dbReference>
<dbReference type="PANTHER" id="PTHR30371:SF0">
    <property type="entry name" value="SEC-INDEPENDENT PROTEIN TRANSLOCASE PROTEIN TATC, CHLOROPLASTIC-RELATED"/>
    <property type="match status" value="1"/>
</dbReference>
<dbReference type="Pfam" id="PF00902">
    <property type="entry name" value="TatC"/>
    <property type="match status" value="1"/>
</dbReference>
<dbReference type="PRINTS" id="PR01840">
    <property type="entry name" value="TATCFAMILY"/>
</dbReference>
<comment type="function">
    <text evidence="1">Part of the twin-arginine translocation (Tat) system that transports large folded proteins containing a characteristic twin-arginine motif in their signal peptide across membranes. Together with TatB, TatC is part of a receptor directly interacting with Tat signal peptides.</text>
</comment>
<comment type="subunit">
    <text evidence="1">The Tat system comprises two distinct complexes: a TatABC complex, containing multiple copies of TatA, TatB and TatC subunits, and a separate TatA complex, containing only TatA subunits. Substrates initially bind to the TatABC complex, which probably triggers association of the separate TatA complex to form the active translocon.</text>
</comment>
<comment type="subcellular location">
    <subcellularLocation>
        <location evidence="1">Cell membrane</location>
        <topology evidence="1">Multi-pass membrane protein</topology>
    </subcellularLocation>
</comment>
<comment type="similarity">
    <text evidence="1">Belongs to the TatC family.</text>
</comment>
<sequence length="293" mass="32656">MATPDQDVRNRKINPEARMELKEHLREFRDRLIKAAIATIIAAIIGTVFLYQPFIEMISAPLQQINIETGRRANLNYGSVASPFDQLLKVGMYIGLVIASPVWLYQALRFLLPALHTKEKKYLFGFLTASIFAFACGVAISYFTLPGVVYALLKFTPVNESNYIDAGVYISFILKFVVTFSCAFIIPVILVGINMLGLIRGKTILKSWRWVVVLVAVIAALTAPGSDIMMMFVLMAPLLIFFFAAIGICMINDKRRDRKLAKLAQGSDEASLNTATSSEDLAKMGYFEEEKTS</sequence>
<accession>D2NT99</accession>
<name>TATC_ROTMD</name>
<organism>
    <name type="scientific">Rothia mucilaginosa (strain DY-18)</name>
    <name type="common">Stomatococcus mucilaginosus</name>
    <dbReference type="NCBI Taxonomy" id="680646"/>
    <lineage>
        <taxon>Bacteria</taxon>
        <taxon>Bacillati</taxon>
        <taxon>Actinomycetota</taxon>
        <taxon>Actinomycetes</taxon>
        <taxon>Micrococcales</taxon>
        <taxon>Micrococcaceae</taxon>
        <taxon>Rothia</taxon>
    </lineage>
</organism>
<protein>
    <recommendedName>
        <fullName evidence="1">Sec-independent protein translocase protein TatC</fullName>
    </recommendedName>
</protein>
<keyword id="KW-1003">Cell membrane</keyword>
<keyword id="KW-0472">Membrane</keyword>
<keyword id="KW-0653">Protein transport</keyword>
<keyword id="KW-1185">Reference proteome</keyword>
<keyword id="KW-0811">Translocation</keyword>
<keyword id="KW-0812">Transmembrane</keyword>
<keyword id="KW-1133">Transmembrane helix</keyword>
<keyword id="KW-0813">Transport</keyword>